<evidence type="ECO:0000255" key="1">
    <source>
        <dbReference type="HAMAP-Rule" id="MF_01031"/>
    </source>
</evidence>
<keyword id="KW-0028">Amino-acid biosynthesis</keyword>
<keyword id="KW-0100">Branched-chain amino acid biosynthesis</keyword>
<keyword id="KW-0432">Leucine biosynthesis</keyword>
<keyword id="KW-0456">Lyase</keyword>
<keyword id="KW-1185">Reference proteome</keyword>
<gene>
    <name evidence="1" type="primary">leuD</name>
    <name type="ordered locus">SSA_0981</name>
</gene>
<protein>
    <recommendedName>
        <fullName evidence="1">3-isopropylmalate dehydratase small subunit</fullName>
        <ecNumber evidence="1">4.2.1.33</ecNumber>
    </recommendedName>
    <alternativeName>
        <fullName evidence="1">Alpha-IPM isomerase</fullName>
        <shortName evidence="1">IPMI</shortName>
    </alternativeName>
    <alternativeName>
        <fullName evidence="1">Isopropylmalate isomerase</fullName>
    </alternativeName>
</protein>
<sequence>MEKFTIYTGTTVPLMNDNIDTDQILPKQFLKLIDKKGFGKYLMYAWRYLDNQYTEDPDFVFNRPEYRKATILITGDNFGAGSSREHAAWALADYGFKVVIAGSFGDIHYNNELNNGMLPIVQPLEVRQALANLKPTDQVTVDLEQQKIFSPVGEFSFDIDGEWKHKLLNGLDDIGITLQYEDLITEYEKNRPSYWQ</sequence>
<feature type="chain" id="PRO_1000063852" description="3-isopropylmalate dehydratase small subunit">
    <location>
        <begin position="1"/>
        <end position="196"/>
    </location>
</feature>
<name>LEUD_STRSV</name>
<proteinExistence type="inferred from homology"/>
<accession>A3CMJ3</accession>
<dbReference type="EC" id="4.2.1.33" evidence="1"/>
<dbReference type="EMBL" id="CP000387">
    <property type="protein sequence ID" value="ABN44398.1"/>
    <property type="molecule type" value="Genomic_DNA"/>
</dbReference>
<dbReference type="RefSeq" id="WP_002909937.1">
    <property type="nucleotide sequence ID" value="NC_009009.1"/>
</dbReference>
<dbReference type="RefSeq" id="YP_001034948.1">
    <property type="nucleotide sequence ID" value="NC_009009.1"/>
</dbReference>
<dbReference type="SMR" id="A3CMJ3"/>
<dbReference type="STRING" id="388919.SSA_0981"/>
<dbReference type="KEGG" id="ssa:SSA_0981"/>
<dbReference type="PATRIC" id="fig|388919.9.peg.930"/>
<dbReference type="eggNOG" id="COG0066">
    <property type="taxonomic scope" value="Bacteria"/>
</dbReference>
<dbReference type="HOGENOM" id="CLU_081378_0_3_9"/>
<dbReference type="OrthoDB" id="9777465at2"/>
<dbReference type="UniPathway" id="UPA00048">
    <property type="reaction ID" value="UER00071"/>
</dbReference>
<dbReference type="Proteomes" id="UP000002148">
    <property type="component" value="Chromosome"/>
</dbReference>
<dbReference type="GO" id="GO:0009316">
    <property type="term" value="C:3-isopropylmalate dehydratase complex"/>
    <property type="evidence" value="ECO:0007669"/>
    <property type="project" value="InterPro"/>
</dbReference>
<dbReference type="GO" id="GO:0003861">
    <property type="term" value="F:3-isopropylmalate dehydratase activity"/>
    <property type="evidence" value="ECO:0007669"/>
    <property type="project" value="UniProtKB-UniRule"/>
</dbReference>
<dbReference type="GO" id="GO:0009098">
    <property type="term" value="P:L-leucine biosynthetic process"/>
    <property type="evidence" value="ECO:0007669"/>
    <property type="project" value="UniProtKB-UniRule"/>
</dbReference>
<dbReference type="CDD" id="cd01577">
    <property type="entry name" value="IPMI_Swivel"/>
    <property type="match status" value="1"/>
</dbReference>
<dbReference type="FunFam" id="3.20.19.10:FF:000003">
    <property type="entry name" value="3-isopropylmalate dehydratase small subunit"/>
    <property type="match status" value="1"/>
</dbReference>
<dbReference type="Gene3D" id="3.20.19.10">
    <property type="entry name" value="Aconitase, domain 4"/>
    <property type="match status" value="1"/>
</dbReference>
<dbReference type="HAMAP" id="MF_01031">
    <property type="entry name" value="LeuD_type1"/>
    <property type="match status" value="1"/>
</dbReference>
<dbReference type="InterPro" id="IPR004431">
    <property type="entry name" value="3-IsopropMal_deHydase_ssu"/>
</dbReference>
<dbReference type="InterPro" id="IPR015928">
    <property type="entry name" value="Aconitase/3IPM_dehydase_swvl"/>
</dbReference>
<dbReference type="InterPro" id="IPR000573">
    <property type="entry name" value="AconitaseA/IPMdHydase_ssu_swvl"/>
</dbReference>
<dbReference type="InterPro" id="IPR033940">
    <property type="entry name" value="IPMI_Swivel"/>
</dbReference>
<dbReference type="InterPro" id="IPR050075">
    <property type="entry name" value="LeuD"/>
</dbReference>
<dbReference type="NCBIfam" id="TIGR00171">
    <property type="entry name" value="leuD"/>
    <property type="match status" value="1"/>
</dbReference>
<dbReference type="NCBIfam" id="NF002458">
    <property type="entry name" value="PRK01641.1"/>
    <property type="match status" value="1"/>
</dbReference>
<dbReference type="PANTHER" id="PTHR43345:SF5">
    <property type="entry name" value="3-ISOPROPYLMALATE DEHYDRATASE SMALL SUBUNIT"/>
    <property type="match status" value="1"/>
</dbReference>
<dbReference type="PANTHER" id="PTHR43345">
    <property type="entry name" value="3-ISOPROPYLMALATE DEHYDRATASE SMALL SUBUNIT 2-RELATED-RELATED"/>
    <property type="match status" value="1"/>
</dbReference>
<dbReference type="Pfam" id="PF00694">
    <property type="entry name" value="Aconitase_C"/>
    <property type="match status" value="1"/>
</dbReference>
<dbReference type="SUPFAM" id="SSF52016">
    <property type="entry name" value="LeuD/IlvD-like"/>
    <property type="match status" value="1"/>
</dbReference>
<organism>
    <name type="scientific">Streptococcus sanguinis (strain SK36)</name>
    <dbReference type="NCBI Taxonomy" id="388919"/>
    <lineage>
        <taxon>Bacteria</taxon>
        <taxon>Bacillati</taxon>
        <taxon>Bacillota</taxon>
        <taxon>Bacilli</taxon>
        <taxon>Lactobacillales</taxon>
        <taxon>Streptococcaceae</taxon>
        <taxon>Streptococcus</taxon>
    </lineage>
</organism>
<comment type="function">
    <text evidence="1">Catalyzes the isomerization between 2-isopropylmalate and 3-isopropylmalate, via the formation of 2-isopropylmaleate.</text>
</comment>
<comment type="catalytic activity">
    <reaction evidence="1">
        <text>(2R,3S)-3-isopropylmalate = (2S)-2-isopropylmalate</text>
        <dbReference type="Rhea" id="RHEA:32287"/>
        <dbReference type="ChEBI" id="CHEBI:1178"/>
        <dbReference type="ChEBI" id="CHEBI:35121"/>
        <dbReference type="EC" id="4.2.1.33"/>
    </reaction>
</comment>
<comment type="pathway">
    <text evidence="1">Amino-acid biosynthesis; L-leucine biosynthesis; L-leucine from 3-methyl-2-oxobutanoate: step 2/4.</text>
</comment>
<comment type="subunit">
    <text evidence="1">Heterodimer of LeuC and LeuD.</text>
</comment>
<comment type="similarity">
    <text evidence="1">Belongs to the LeuD family. LeuD type 1 subfamily.</text>
</comment>
<reference key="1">
    <citation type="journal article" date="2007" name="J. Bacteriol.">
        <title>Genome of the opportunistic pathogen Streptococcus sanguinis.</title>
        <authorList>
            <person name="Xu P."/>
            <person name="Alves J.M."/>
            <person name="Kitten T."/>
            <person name="Brown A."/>
            <person name="Chen Z."/>
            <person name="Ozaki L.S."/>
            <person name="Manque P."/>
            <person name="Ge X."/>
            <person name="Serrano M.G."/>
            <person name="Puiu D."/>
            <person name="Hendricks S."/>
            <person name="Wang Y."/>
            <person name="Chaplin M.D."/>
            <person name="Akan D."/>
            <person name="Paik S."/>
            <person name="Peterson D.L."/>
            <person name="Macrina F.L."/>
            <person name="Buck G.A."/>
        </authorList>
    </citation>
    <scope>NUCLEOTIDE SEQUENCE [LARGE SCALE GENOMIC DNA]</scope>
    <source>
        <strain>SK36</strain>
    </source>
</reference>